<feature type="chain" id="PRO_1000088149" description="7-cyano-7-deazaguanine synthase">
    <location>
        <begin position="1"/>
        <end position="232"/>
    </location>
</feature>
<feature type="binding site" evidence="1">
    <location>
        <begin position="7"/>
        <end position="17"/>
    </location>
    <ligand>
        <name>ATP</name>
        <dbReference type="ChEBI" id="CHEBI:30616"/>
    </ligand>
</feature>
<feature type="binding site" evidence="1">
    <location>
        <position position="185"/>
    </location>
    <ligand>
        <name>Zn(2+)</name>
        <dbReference type="ChEBI" id="CHEBI:29105"/>
    </ligand>
</feature>
<feature type="binding site" evidence="1">
    <location>
        <position position="193"/>
    </location>
    <ligand>
        <name>Zn(2+)</name>
        <dbReference type="ChEBI" id="CHEBI:29105"/>
    </ligand>
</feature>
<feature type="binding site" evidence="1">
    <location>
        <position position="196"/>
    </location>
    <ligand>
        <name>Zn(2+)</name>
        <dbReference type="ChEBI" id="CHEBI:29105"/>
    </ligand>
</feature>
<feature type="binding site" evidence="1">
    <location>
        <position position="199"/>
    </location>
    <ligand>
        <name>Zn(2+)</name>
        <dbReference type="ChEBI" id="CHEBI:29105"/>
    </ligand>
</feature>
<protein>
    <recommendedName>
        <fullName evidence="1">7-cyano-7-deazaguanine synthase</fullName>
        <ecNumber evidence="1">6.3.4.20</ecNumber>
    </recommendedName>
    <alternativeName>
        <fullName evidence="1">7-cyano-7-carbaguanine synthase</fullName>
    </alternativeName>
    <alternativeName>
        <fullName evidence="1">PreQ(0) synthase</fullName>
    </alternativeName>
    <alternativeName>
        <fullName evidence="1">Queuosine biosynthesis protein QueC</fullName>
    </alternativeName>
</protein>
<accession>B0CIX5</accession>
<gene>
    <name evidence="1" type="primary">queC</name>
    <name type="ordered locus">BSUIS_A1812</name>
</gene>
<name>QUEC_BRUSI</name>
<organism>
    <name type="scientific">Brucella suis (strain ATCC 23445 / NCTC 10510)</name>
    <dbReference type="NCBI Taxonomy" id="470137"/>
    <lineage>
        <taxon>Bacteria</taxon>
        <taxon>Pseudomonadati</taxon>
        <taxon>Pseudomonadota</taxon>
        <taxon>Alphaproteobacteria</taxon>
        <taxon>Hyphomicrobiales</taxon>
        <taxon>Brucellaceae</taxon>
        <taxon>Brucella/Ochrobactrum group</taxon>
        <taxon>Brucella</taxon>
    </lineage>
</organism>
<evidence type="ECO:0000255" key="1">
    <source>
        <dbReference type="HAMAP-Rule" id="MF_01633"/>
    </source>
</evidence>
<proteinExistence type="inferred from homology"/>
<comment type="function">
    <text evidence="1">Catalyzes the ATP-dependent conversion of 7-carboxy-7-deazaguanine (CDG) to 7-cyano-7-deazaguanine (preQ(0)).</text>
</comment>
<comment type="catalytic activity">
    <reaction evidence="1">
        <text>7-carboxy-7-deazaguanine + NH4(+) + ATP = 7-cyano-7-deazaguanine + ADP + phosphate + H2O + H(+)</text>
        <dbReference type="Rhea" id="RHEA:27982"/>
        <dbReference type="ChEBI" id="CHEBI:15377"/>
        <dbReference type="ChEBI" id="CHEBI:15378"/>
        <dbReference type="ChEBI" id="CHEBI:28938"/>
        <dbReference type="ChEBI" id="CHEBI:30616"/>
        <dbReference type="ChEBI" id="CHEBI:43474"/>
        <dbReference type="ChEBI" id="CHEBI:45075"/>
        <dbReference type="ChEBI" id="CHEBI:61036"/>
        <dbReference type="ChEBI" id="CHEBI:456216"/>
        <dbReference type="EC" id="6.3.4.20"/>
    </reaction>
</comment>
<comment type="cofactor">
    <cofactor evidence="1">
        <name>Zn(2+)</name>
        <dbReference type="ChEBI" id="CHEBI:29105"/>
    </cofactor>
    <text evidence="1">Binds 1 zinc ion per subunit.</text>
</comment>
<comment type="pathway">
    <text evidence="1">Purine metabolism; 7-cyano-7-deazaguanine biosynthesis.</text>
</comment>
<comment type="similarity">
    <text evidence="1">Belongs to the QueC family.</text>
</comment>
<reference key="1">
    <citation type="submission" date="2007-12" db="EMBL/GenBank/DDBJ databases">
        <title>Brucella suis ATCC 23445 whole genome shotgun sequencing project.</title>
        <authorList>
            <person name="Setubal J.C."/>
            <person name="Bowns C."/>
            <person name="Boyle S."/>
            <person name="Crasta O.R."/>
            <person name="Czar M.J."/>
            <person name="Dharmanolla C."/>
            <person name="Gillespie J.J."/>
            <person name="Kenyon R.W."/>
            <person name="Lu J."/>
            <person name="Mane S."/>
            <person name="Mohapatra S."/>
            <person name="Nagrani S."/>
            <person name="Purkayastha A."/>
            <person name="Rajasimha H.K."/>
            <person name="Shallom J.M."/>
            <person name="Shallom S."/>
            <person name="Shukla M."/>
            <person name="Snyder E.E."/>
            <person name="Sobral B.W."/>
            <person name="Wattam A.R."/>
            <person name="Will R."/>
            <person name="Williams K."/>
            <person name="Yoo H."/>
            <person name="Bruce D."/>
            <person name="Detter C."/>
            <person name="Munk C."/>
            <person name="Brettin T.S."/>
        </authorList>
    </citation>
    <scope>NUCLEOTIDE SEQUENCE [LARGE SCALE GENOMIC DNA]</scope>
    <source>
        <strain>ATCC 23445 / NCTC 10510</strain>
    </source>
</reference>
<dbReference type="EC" id="6.3.4.20" evidence="1"/>
<dbReference type="EMBL" id="CP000911">
    <property type="protein sequence ID" value="ABY38828.1"/>
    <property type="molecule type" value="Genomic_DNA"/>
</dbReference>
<dbReference type="RefSeq" id="WP_002965038.1">
    <property type="nucleotide sequence ID" value="NC_010169.1"/>
</dbReference>
<dbReference type="SMR" id="B0CIX5"/>
<dbReference type="GeneID" id="97534751"/>
<dbReference type="KEGG" id="bmt:BSUIS_A1812"/>
<dbReference type="HOGENOM" id="CLU_081854_1_0_5"/>
<dbReference type="UniPathway" id="UPA00391"/>
<dbReference type="Proteomes" id="UP000008545">
    <property type="component" value="Chromosome I"/>
</dbReference>
<dbReference type="GO" id="GO:0005524">
    <property type="term" value="F:ATP binding"/>
    <property type="evidence" value="ECO:0007669"/>
    <property type="project" value="UniProtKB-UniRule"/>
</dbReference>
<dbReference type="GO" id="GO:0016879">
    <property type="term" value="F:ligase activity, forming carbon-nitrogen bonds"/>
    <property type="evidence" value="ECO:0007669"/>
    <property type="project" value="UniProtKB-UniRule"/>
</dbReference>
<dbReference type="GO" id="GO:0008270">
    <property type="term" value="F:zinc ion binding"/>
    <property type="evidence" value="ECO:0007669"/>
    <property type="project" value="UniProtKB-UniRule"/>
</dbReference>
<dbReference type="GO" id="GO:0008616">
    <property type="term" value="P:queuosine biosynthetic process"/>
    <property type="evidence" value="ECO:0007669"/>
    <property type="project" value="UniProtKB-UniRule"/>
</dbReference>
<dbReference type="CDD" id="cd01995">
    <property type="entry name" value="QueC-like"/>
    <property type="match status" value="1"/>
</dbReference>
<dbReference type="Gene3D" id="3.40.50.620">
    <property type="entry name" value="HUPs"/>
    <property type="match status" value="1"/>
</dbReference>
<dbReference type="HAMAP" id="MF_01633">
    <property type="entry name" value="QueC"/>
    <property type="match status" value="1"/>
</dbReference>
<dbReference type="InterPro" id="IPR018317">
    <property type="entry name" value="QueC"/>
</dbReference>
<dbReference type="InterPro" id="IPR014729">
    <property type="entry name" value="Rossmann-like_a/b/a_fold"/>
</dbReference>
<dbReference type="NCBIfam" id="TIGR00364">
    <property type="entry name" value="7-cyano-7-deazaguanine synthase QueC"/>
    <property type="match status" value="1"/>
</dbReference>
<dbReference type="PANTHER" id="PTHR42914">
    <property type="entry name" value="7-CYANO-7-DEAZAGUANINE SYNTHASE"/>
    <property type="match status" value="1"/>
</dbReference>
<dbReference type="PANTHER" id="PTHR42914:SF1">
    <property type="entry name" value="7-CYANO-7-DEAZAGUANINE SYNTHASE"/>
    <property type="match status" value="1"/>
</dbReference>
<dbReference type="Pfam" id="PF06508">
    <property type="entry name" value="QueC"/>
    <property type="match status" value="1"/>
</dbReference>
<dbReference type="PIRSF" id="PIRSF006293">
    <property type="entry name" value="ExsB"/>
    <property type="match status" value="1"/>
</dbReference>
<dbReference type="SUPFAM" id="SSF52402">
    <property type="entry name" value="Adenine nucleotide alpha hydrolases-like"/>
    <property type="match status" value="1"/>
</dbReference>
<keyword id="KW-0067">ATP-binding</keyword>
<keyword id="KW-0436">Ligase</keyword>
<keyword id="KW-0479">Metal-binding</keyword>
<keyword id="KW-0547">Nucleotide-binding</keyword>
<keyword id="KW-0671">Queuosine biosynthesis</keyword>
<keyword id="KW-0862">Zinc</keyword>
<sequence>MKTLVICSGGLDSVSLAHKMAAEHELTGLLSFDYGQRHKKELDFAQACAKRLGVPHQIIDIRTIGASLTGSALTDDVDVPDGHYAEETMKVTVVPNRNAIMLAIAFGVAAAQKADAVALAVHGGDHFIYPDCRPGFIEAFQTMQKHALDGYADVKLLAPYVHATKADIVADGAKYRTPFEATWSCYKGADRHCGRCGTCVERREAFHLAGIDDPTSYEDADFWRATTQKRNA</sequence>